<reference key="1">
    <citation type="journal article" date="1998" name="J. Clin. Microbiol.">
        <title>Identification of streptococci to species level by sequencing the gene encoding the manganese-dependent superoxide dismutase.</title>
        <authorList>
            <person name="Poyart C."/>
            <person name="Quesne G."/>
            <person name="Coulon S."/>
            <person name="Berche P."/>
            <person name="Trieu-Cuot P."/>
        </authorList>
    </citation>
    <scope>NUCLEOTIDE SEQUENCE [GENOMIC DNA]</scope>
    <source>
        <strain>ATCC 10557 / CIP 103216 / LMG 14533 / NCTC 7864 / SK 2</strain>
        <strain>ATCC 35037 / CIP 102922 / DSM 20627 / KCTC 13048 / LMG 14532 / NCTC 11427 / PB182</strain>
        <strain>NEM1121</strain>
    </source>
</reference>
<gene>
    <name type="primary">sodA</name>
</gene>
<comment type="function">
    <text evidence="1">Destroys superoxide anion radicals which are normally produced within the cells and which are toxic to biological systems. Catalyzes the dismutation of superoxide anion radicals into O2 and H2O2 by successive reduction and oxidation of the transition metal ion at the active site.</text>
</comment>
<comment type="catalytic activity">
    <reaction evidence="1">
        <text>2 superoxide + 2 H(+) = H2O2 + O2</text>
        <dbReference type="Rhea" id="RHEA:20696"/>
        <dbReference type="ChEBI" id="CHEBI:15378"/>
        <dbReference type="ChEBI" id="CHEBI:15379"/>
        <dbReference type="ChEBI" id="CHEBI:16240"/>
        <dbReference type="ChEBI" id="CHEBI:18421"/>
        <dbReference type="EC" id="1.15.1.1"/>
    </reaction>
    <physiologicalReaction direction="left-to-right" evidence="1">
        <dbReference type="Rhea" id="RHEA:20697"/>
    </physiologicalReaction>
</comment>
<comment type="cofactor">
    <cofactor evidence="1">
        <name>Mn(2+)</name>
        <dbReference type="ChEBI" id="CHEBI:29035"/>
    </cofactor>
    <cofactor evidence="1">
        <name>Fe(3+)</name>
        <dbReference type="ChEBI" id="CHEBI:29034"/>
    </cofactor>
    <text evidence="1">Binds 1 Mn(2+) or Fe(3+) ion per subunit.</text>
</comment>
<comment type="similarity">
    <text evidence="3">Belongs to the iron/manganese superoxide dismutase family.</text>
</comment>
<keyword id="KW-0408">Iron</keyword>
<keyword id="KW-0464">Manganese</keyword>
<keyword id="KW-0479">Metal-binding</keyword>
<keyword id="KW-0560">Oxidoreductase</keyword>
<dbReference type="EC" id="1.15.1.1" evidence="1"/>
<dbReference type="EMBL" id="Z99195">
    <property type="protein sequence ID" value="CAB16339.1"/>
    <property type="molecule type" value="Genomic_DNA"/>
</dbReference>
<dbReference type="EMBL" id="Z95912">
    <property type="protein sequence ID" value="CAB09365.1"/>
    <property type="molecule type" value="Genomic_DNA"/>
</dbReference>
<dbReference type="EMBL" id="Z99194">
    <property type="protein sequence ID" value="CAB16338.1"/>
    <property type="molecule type" value="Genomic_DNA"/>
</dbReference>
<dbReference type="EMBL" id="Z95911">
    <property type="protein sequence ID" value="CAB09364.1"/>
    <property type="molecule type" value="Genomic_DNA"/>
</dbReference>
<dbReference type="SMR" id="O54263"/>
<dbReference type="STRING" id="1303.SORDD17_01437"/>
<dbReference type="GO" id="GO:0005737">
    <property type="term" value="C:cytoplasm"/>
    <property type="evidence" value="ECO:0007669"/>
    <property type="project" value="TreeGrafter"/>
</dbReference>
<dbReference type="GO" id="GO:0046872">
    <property type="term" value="F:metal ion binding"/>
    <property type="evidence" value="ECO:0007669"/>
    <property type="project" value="UniProtKB-KW"/>
</dbReference>
<dbReference type="GO" id="GO:0004784">
    <property type="term" value="F:superoxide dismutase activity"/>
    <property type="evidence" value="ECO:0007669"/>
    <property type="project" value="UniProtKB-EC"/>
</dbReference>
<dbReference type="FunFam" id="1.10.287.990:FF:000001">
    <property type="entry name" value="Superoxide dismutase"/>
    <property type="match status" value="1"/>
</dbReference>
<dbReference type="Gene3D" id="1.10.287.990">
    <property type="entry name" value="Fe,Mn superoxide dismutase (SOD) domain"/>
    <property type="match status" value="1"/>
</dbReference>
<dbReference type="Gene3D" id="3.55.40.20">
    <property type="entry name" value="Iron/manganese superoxide dismutase, C-terminal domain"/>
    <property type="match status" value="1"/>
</dbReference>
<dbReference type="InterPro" id="IPR001189">
    <property type="entry name" value="Mn/Fe_SOD"/>
</dbReference>
<dbReference type="InterPro" id="IPR019832">
    <property type="entry name" value="Mn/Fe_SOD_C"/>
</dbReference>
<dbReference type="InterPro" id="IPR019831">
    <property type="entry name" value="Mn/Fe_SOD_N"/>
</dbReference>
<dbReference type="InterPro" id="IPR036324">
    <property type="entry name" value="Mn/Fe_SOD_N_sf"/>
</dbReference>
<dbReference type="InterPro" id="IPR036314">
    <property type="entry name" value="SOD_C_sf"/>
</dbReference>
<dbReference type="PANTHER" id="PTHR43595">
    <property type="entry name" value="37S RIBOSOMAL PROTEIN S26, MITOCHONDRIAL"/>
    <property type="match status" value="1"/>
</dbReference>
<dbReference type="PANTHER" id="PTHR43595:SF2">
    <property type="entry name" value="SMALL RIBOSOMAL SUBUNIT PROTEIN MS42"/>
    <property type="match status" value="1"/>
</dbReference>
<dbReference type="Pfam" id="PF02777">
    <property type="entry name" value="Sod_Fe_C"/>
    <property type="match status" value="1"/>
</dbReference>
<dbReference type="Pfam" id="PF00081">
    <property type="entry name" value="Sod_Fe_N"/>
    <property type="match status" value="1"/>
</dbReference>
<dbReference type="PRINTS" id="PR01703">
    <property type="entry name" value="MNSODISMTASE"/>
</dbReference>
<dbReference type="SUPFAM" id="SSF54719">
    <property type="entry name" value="Fe,Mn superoxide dismutase (SOD), C-terminal domain"/>
    <property type="match status" value="1"/>
</dbReference>
<dbReference type="SUPFAM" id="SSF46609">
    <property type="entry name" value="Fe,Mn superoxide dismutase (SOD), N-terminal domain"/>
    <property type="match status" value="1"/>
</dbReference>
<sequence length="145" mass="15700">YIDAETMHLHHDKHHQAYVNNANAALEKHPEIGEDLEALLADVESIPADIRQALINNGGGHLNHALFWELMTPEKTAPSAELAAAIDATFGSFEEFQAAFTAAATTRFGSGWAWLVVNKEGKLEVTSTANQDTPISEGKKPILGL</sequence>
<accession>O54263</accession>
<accession>O33693</accession>
<accession>O33694</accession>
<evidence type="ECO:0000250" key="1">
    <source>
        <dbReference type="UniProtKB" id="P80293"/>
    </source>
</evidence>
<evidence type="ECO:0000256" key="2">
    <source>
        <dbReference type="SAM" id="MobiDB-lite"/>
    </source>
</evidence>
<evidence type="ECO:0000305" key="3"/>
<name>SODM_STROR</name>
<feature type="chain" id="PRO_0000160095" description="Superoxide dismutase [Mn/Fe]">
    <location>
        <begin position="1" status="less than"/>
        <end position="145" status="greater than"/>
    </location>
</feature>
<feature type="region of interest" description="Disordered" evidence="2">
    <location>
        <begin position="126"/>
        <end position="145"/>
    </location>
</feature>
<feature type="binding site" evidence="1">
    <location>
        <position position="10"/>
    </location>
    <ligand>
        <name>Fe(3+)</name>
        <dbReference type="ChEBI" id="CHEBI:29034"/>
    </ligand>
</feature>
<feature type="binding site" evidence="1">
    <location>
        <position position="10"/>
    </location>
    <ligand>
        <name>Mn(2+)</name>
        <dbReference type="ChEBI" id="CHEBI:29035"/>
    </ligand>
</feature>
<feature type="binding site" evidence="1">
    <location>
        <position position="64"/>
    </location>
    <ligand>
        <name>Fe(3+)</name>
        <dbReference type="ChEBI" id="CHEBI:29034"/>
    </ligand>
</feature>
<feature type="binding site" evidence="1">
    <location>
        <position position="64"/>
    </location>
    <ligand>
        <name>Mn(2+)</name>
        <dbReference type="ChEBI" id="CHEBI:29035"/>
    </ligand>
</feature>
<feature type="sequence variant" description="In strain: CIP 103216.">
    <original>A</original>
    <variation>T</variation>
    <location>
        <position position="17"/>
    </location>
</feature>
<feature type="sequence variant" description="In strain: CIP 102922T.">
    <original>I</original>
    <variation>T</variation>
    <location>
        <position position="32"/>
    </location>
</feature>
<feature type="sequence variant" description="In strain: CIP 102922T.">
    <original>E</original>
    <variation>D</variation>
    <location>
        <position position="44"/>
    </location>
</feature>
<feature type="sequence variant" description="In strain: NEM1121.">
    <original>A</original>
    <variation>V</variation>
    <location>
        <position position="113"/>
    </location>
</feature>
<feature type="sequence variant" description="In strain: CIP 103216.">
    <original>A</original>
    <variation>T</variation>
    <location>
        <position position="129"/>
    </location>
</feature>
<feature type="sequence variant" description="In strain: NEM1121.">
    <original>G</original>
    <variation>S</variation>
    <location>
        <position position="138"/>
    </location>
</feature>
<feature type="non-terminal residue">
    <location>
        <position position="1"/>
    </location>
</feature>
<feature type="non-terminal residue">
    <location>
        <position position="145"/>
    </location>
</feature>
<proteinExistence type="inferred from homology"/>
<protein>
    <recommendedName>
        <fullName>Superoxide dismutase [Mn/Fe]</fullName>
        <ecNumber evidence="1">1.15.1.1</ecNumber>
    </recommendedName>
</protein>
<organism>
    <name type="scientific">Streptococcus oralis</name>
    <dbReference type="NCBI Taxonomy" id="1303"/>
    <lineage>
        <taxon>Bacteria</taxon>
        <taxon>Bacillati</taxon>
        <taxon>Bacillota</taxon>
        <taxon>Bacilli</taxon>
        <taxon>Lactobacillales</taxon>
        <taxon>Streptococcaceae</taxon>
        <taxon>Streptococcus</taxon>
    </lineage>
</organism>